<gene>
    <name evidence="7" type="primary">Scgb2a1</name>
    <name evidence="7" type="synonym">Psbpc3</name>
</gene>
<evidence type="ECO:0000250" key="1"/>
<evidence type="ECO:0000250" key="2">
    <source>
        <dbReference type="UniProtKB" id="P02780"/>
    </source>
</evidence>
<evidence type="ECO:0000255" key="3"/>
<evidence type="ECO:0000269" key="4">
    <source>
    </source>
</evidence>
<evidence type="ECO:0000305" key="5"/>
<evidence type="ECO:0000312" key="6">
    <source>
        <dbReference type="EMBL" id="CAB75892.1"/>
    </source>
</evidence>
<evidence type="ECO:0000312" key="7">
    <source>
        <dbReference type="RGD" id="3424"/>
    </source>
</evidence>
<feature type="signal peptide" evidence="3">
    <location>
        <begin position="1"/>
        <end position="18"/>
    </location>
</feature>
<feature type="chain" id="PRO_0000284683" description="Secretoglobin family 2A member 1" evidence="3">
    <location>
        <begin position="19"/>
        <end position="95"/>
    </location>
</feature>
<feature type="glycosylation site" description="N-linked (GlcNAc...) asparagine" evidence="3">
    <location>
        <position position="35"/>
    </location>
</feature>
<feature type="glycosylation site" description="N-linked (GlcNAc...) asparagine" evidence="3">
    <location>
        <position position="72"/>
    </location>
</feature>
<dbReference type="EMBL" id="V01260">
    <property type="protein sequence ID" value="CAB75892.1"/>
    <property type="molecule type" value="Genomic_DNA"/>
</dbReference>
<dbReference type="EMBL" id="V01261">
    <property type="protein sequence ID" value="CAB75892.1"/>
    <property type="status" value="JOINED"/>
    <property type="molecule type" value="Genomic_DNA"/>
</dbReference>
<dbReference type="EMBL" id="V01262">
    <property type="protein sequence ID" value="CAB75892.1"/>
    <property type="status" value="JOINED"/>
    <property type="molecule type" value="Genomic_DNA"/>
</dbReference>
<dbReference type="SMR" id="Q9JHB9"/>
<dbReference type="FunCoup" id="Q9JHB9">
    <property type="interactions" value="14"/>
</dbReference>
<dbReference type="GlyCosmos" id="Q9JHB9">
    <property type="glycosylation" value="2 sites, No reported glycans"/>
</dbReference>
<dbReference type="GlyGen" id="Q9JHB9">
    <property type="glycosylation" value="2 sites"/>
</dbReference>
<dbReference type="PhosphoSitePlus" id="Q9JHB9"/>
<dbReference type="UCSC" id="RGD:3424">
    <property type="organism name" value="rat"/>
</dbReference>
<dbReference type="AGR" id="RGD:735031"/>
<dbReference type="RGD" id="3424">
    <property type="gene designation" value="Scgb2a1"/>
</dbReference>
<dbReference type="InParanoid" id="Q9JHB9"/>
<dbReference type="PhylomeDB" id="Q9JHB9"/>
<dbReference type="PRO" id="PR:Q9JHB9"/>
<dbReference type="Proteomes" id="UP000002494">
    <property type="component" value="Unplaced"/>
</dbReference>
<dbReference type="GO" id="GO:0005615">
    <property type="term" value="C:extracellular space"/>
    <property type="evidence" value="ECO:0000318"/>
    <property type="project" value="GO_Central"/>
</dbReference>
<dbReference type="GO" id="GO:0005496">
    <property type="term" value="F:steroid binding"/>
    <property type="evidence" value="ECO:0007669"/>
    <property type="project" value="UniProtKB-KW"/>
</dbReference>
<dbReference type="GO" id="GO:0030521">
    <property type="term" value="P:androgen receptor signaling pathway"/>
    <property type="evidence" value="ECO:0000318"/>
    <property type="project" value="GO_Central"/>
</dbReference>
<dbReference type="CDD" id="cd00633">
    <property type="entry name" value="Secretoglobin"/>
    <property type="match status" value="1"/>
</dbReference>
<dbReference type="InterPro" id="IPR016126">
    <property type="entry name" value="Secretoglobin"/>
</dbReference>
<dbReference type="InterPro" id="IPR035960">
    <property type="entry name" value="Secretoglobin_sf"/>
</dbReference>
<dbReference type="PANTHER" id="PTHR14037:SF4">
    <property type="entry name" value="MAMMAGLOBIN-B"/>
    <property type="match status" value="1"/>
</dbReference>
<dbReference type="PANTHER" id="PTHR14037">
    <property type="entry name" value="MAMMAGLOBIN-RELATED"/>
    <property type="match status" value="1"/>
</dbReference>
<dbReference type="Pfam" id="PF01099">
    <property type="entry name" value="Uteroglobin"/>
    <property type="match status" value="1"/>
</dbReference>
<dbReference type="SUPFAM" id="SSF48201">
    <property type="entry name" value="Uteroglobin-like"/>
    <property type="match status" value="1"/>
</dbReference>
<dbReference type="PROSITE" id="PS51311">
    <property type="entry name" value="SCGB"/>
    <property type="match status" value="1"/>
</dbReference>
<comment type="function">
    <text evidence="2">Part of prostatein which is the major secretory glycoprotein of ventral prostate gland. Steroid-binding protein; can bind non-polar steroids, cholesterol and a group of small proline-rich peptides (By similarity).</text>
</comment>
<comment type="subunit">
    <text evidence="2">Prostatein is composed of three different peptides called C1, C2 and C3. These form covalent C1:C3 (F) and C2:C3 (S) heterodimers whose non-covalent association forms tetrameric (C1:C3/C3:C2) prostatein molecules (By similarity).</text>
</comment>
<comment type="subcellular location">
    <subcellularLocation>
        <location evidence="1">Secreted</location>
    </subcellularLocation>
</comment>
<comment type="tissue specificity">
    <text evidence="4">Expressed at very low level in ventral prostate.</text>
</comment>
<comment type="induction">
    <text evidence="4">By testosterone.</text>
</comment>
<comment type="similarity">
    <text evidence="5">Belongs to the secretoglobin family. Lipophilin subfamily.</text>
</comment>
<sequence length="95" mass="10622">MKLVFLFLLVTIPICCYASGSGCSILDEVIRGTINSTVTLHDYMKLVKPYVHDHFTANAVKQFKQCFLDQTNKTVENVGVMTEAIFNSESCQQPS</sequence>
<name>SG2A1_RAT</name>
<proteinExistence type="evidence at transcript level"/>
<protein>
    <recommendedName>
        <fullName>Secretoglobin family 2A member 1</fullName>
    </recommendedName>
    <alternativeName>
        <fullName>Prostatic steroid-binding protein C3.2</fullName>
    </alternativeName>
</protein>
<organism>
    <name type="scientific">Rattus norvegicus</name>
    <name type="common">Rat</name>
    <dbReference type="NCBI Taxonomy" id="10116"/>
    <lineage>
        <taxon>Eukaryota</taxon>
        <taxon>Metazoa</taxon>
        <taxon>Chordata</taxon>
        <taxon>Craniata</taxon>
        <taxon>Vertebrata</taxon>
        <taxon>Euteleostomi</taxon>
        <taxon>Mammalia</taxon>
        <taxon>Eutheria</taxon>
        <taxon>Euarchontoglires</taxon>
        <taxon>Glires</taxon>
        <taxon>Rodentia</taxon>
        <taxon>Myomorpha</taxon>
        <taxon>Muroidea</taxon>
        <taxon>Muridae</taxon>
        <taxon>Murinae</taxon>
        <taxon>Rattus</taxon>
    </lineage>
</organism>
<reference evidence="5 6" key="1">
    <citation type="journal article" date="1983" name="EMBO J.">
        <title>Rat prostatic steroid binding protein: DNA sequence and transcript maps of the two C3 genes.</title>
        <authorList>
            <person name="Hurst H.C."/>
            <person name="Parker M.G."/>
        </authorList>
    </citation>
    <scope>NUCLEOTIDE SEQUENCE [GENOMIC DNA]</scope>
    <scope>TISSUE SPECIFICITY</scope>
    <scope>INDUCTION</scope>
</reference>
<accession>Q9JHB9</accession>
<keyword id="KW-0325">Glycoprotein</keyword>
<keyword id="KW-0446">Lipid-binding</keyword>
<keyword id="KW-1185">Reference proteome</keyword>
<keyword id="KW-0964">Secreted</keyword>
<keyword id="KW-0732">Signal</keyword>
<keyword id="KW-0754">Steroid-binding</keyword>